<keyword id="KW-1185">Reference proteome</keyword>
<keyword id="KW-0687">Ribonucleoprotein</keyword>
<keyword id="KW-0689">Ribosomal protein</keyword>
<keyword id="KW-0694">RNA-binding</keyword>
<keyword id="KW-0699">rRNA-binding</keyword>
<reference key="1">
    <citation type="journal article" date="2006" name="Nat. Biotechnol.">
        <title>The genome and transcriptomes of the anti-tumor agent Clostridium novyi-NT.</title>
        <authorList>
            <person name="Bettegowda C."/>
            <person name="Huang X."/>
            <person name="Lin J."/>
            <person name="Cheong I."/>
            <person name="Kohli M."/>
            <person name="Szabo S.A."/>
            <person name="Zhang X."/>
            <person name="Diaz L.A. Jr."/>
            <person name="Velculescu V.E."/>
            <person name="Parmigiani G."/>
            <person name="Kinzler K.W."/>
            <person name="Vogelstein B."/>
            <person name="Zhou S."/>
        </authorList>
    </citation>
    <scope>NUCLEOTIDE SEQUENCE [LARGE SCALE GENOMIC DNA]</scope>
    <source>
        <strain>NT</strain>
    </source>
</reference>
<proteinExistence type="inferred from homology"/>
<sequence length="206" mass="22893">MPTVDLYNIEGQKVGDLQLAETVFAVEVNEDVLHQVVVAQLANKRQGNQSAKTRAEVSGGGKKPWRQKGTGRARQGSIRAPQWIHGGVVFAPKPRDYKMSIPKSMRRVAMKSALTSKVNENELVVLESLELDAPKTKEMVKMINAFEGKKPLIVVPESNEVIYKSVRNIEGATVVPVNNINVYDILKHDKFIITKEAVSKIEEVYA</sequence>
<protein>
    <recommendedName>
        <fullName evidence="1">Large ribosomal subunit protein uL4</fullName>
    </recommendedName>
    <alternativeName>
        <fullName evidence="3">50S ribosomal protein L4</fullName>
    </alternativeName>
</protein>
<comment type="function">
    <text evidence="1">One of the primary rRNA binding proteins, this protein initially binds near the 5'-end of the 23S rRNA. It is important during the early stages of 50S assembly. It makes multiple contacts with different domains of the 23S rRNA in the assembled 50S subunit and ribosome.</text>
</comment>
<comment type="function">
    <text evidence="1">Forms part of the polypeptide exit tunnel.</text>
</comment>
<comment type="subunit">
    <text evidence="1">Part of the 50S ribosomal subunit.</text>
</comment>
<comment type="similarity">
    <text evidence="1">Belongs to the universal ribosomal protein uL4 family.</text>
</comment>
<organism>
    <name type="scientific">Clostridium novyi (strain NT)</name>
    <dbReference type="NCBI Taxonomy" id="386415"/>
    <lineage>
        <taxon>Bacteria</taxon>
        <taxon>Bacillati</taxon>
        <taxon>Bacillota</taxon>
        <taxon>Clostridia</taxon>
        <taxon>Eubacteriales</taxon>
        <taxon>Clostridiaceae</taxon>
        <taxon>Clostridium</taxon>
    </lineage>
</organism>
<name>RL4_CLONN</name>
<evidence type="ECO:0000255" key="1">
    <source>
        <dbReference type="HAMAP-Rule" id="MF_01328"/>
    </source>
</evidence>
<evidence type="ECO:0000256" key="2">
    <source>
        <dbReference type="SAM" id="MobiDB-lite"/>
    </source>
</evidence>
<evidence type="ECO:0000305" key="3"/>
<dbReference type="EMBL" id="CP000382">
    <property type="protein sequence ID" value="ABK61736.1"/>
    <property type="molecule type" value="Genomic_DNA"/>
</dbReference>
<dbReference type="RefSeq" id="WP_011721216.1">
    <property type="nucleotide sequence ID" value="NC_008593.1"/>
</dbReference>
<dbReference type="SMR" id="A0PXU7"/>
<dbReference type="STRING" id="386415.NT01CX_1116"/>
<dbReference type="KEGG" id="cno:NT01CX_1116"/>
<dbReference type="eggNOG" id="COG0088">
    <property type="taxonomic scope" value="Bacteria"/>
</dbReference>
<dbReference type="HOGENOM" id="CLU_041575_5_2_9"/>
<dbReference type="Proteomes" id="UP000008220">
    <property type="component" value="Chromosome"/>
</dbReference>
<dbReference type="GO" id="GO:1990904">
    <property type="term" value="C:ribonucleoprotein complex"/>
    <property type="evidence" value="ECO:0007669"/>
    <property type="project" value="UniProtKB-KW"/>
</dbReference>
<dbReference type="GO" id="GO:0005840">
    <property type="term" value="C:ribosome"/>
    <property type="evidence" value="ECO:0007669"/>
    <property type="project" value="UniProtKB-KW"/>
</dbReference>
<dbReference type="GO" id="GO:0019843">
    <property type="term" value="F:rRNA binding"/>
    <property type="evidence" value="ECO:0007669"/>
    <property type="project" value="UniProtKB-UniRule"/>
</dbReference>
<dbReference type="GO" id="GO:0003735">
    <property type="term" value="F:structural constituent of ribosome"/>
    <property type="evidence" value="ECO:0007669"/>
    <property type="project" value="InterPro"/>
</dbReference>
<dbReference type="GO" id="GO:0006412">
    <property type="term" value="P:translation"/>
    <property type="evidence" value="ECO:0007669"/>
    <property type="project" value="UniProtKB-UniRule"/>
</dbReference>
<dbReference type="Gene3D" id="3.40.1370.10">
    <property type="match status" value="1"/>
</dbReference>
<dbReference type="HAMAP" id="MF_01328_B">
    <property type="entry name" value="Ribosomal_uL4_B"/>
    <property type="match status" value="1"/>
</dbReference>
<dbReference type="InterPro" id="IPR002136">
    <property type="entry name" value="Ribosomal_uL4"/>
</dbReference>
<dbReference type="InterPro" id="IPR013005">
    <property type="entry name" value="Ribosomal_uL4-like"/>
</dbReference>
<dbReference type="InterPro" id="IPR023574">
    <property type="entry name" value="Ribosomal_uL4_dom_sf"/>
</dbReference>
<dbReference type="NCBIfam" id="TIGR03953">
    <property type="entry name" value="rplD_bact"/>
    <property type="match status" value="1"/>
</dbReference>
<dbReference type="PANTHER" id="PTHR10746">
    <property type="entry name" value="50S RIBOSOMAL PROTEIN L4"/>
    <property type="match status" value="1"/>
</dbReference>
<dbReference type="PANTHER" id="PTHR10746:SF6">
    <property type="entry name" value="LARGE RIBOSOMAL SUBUNIT PROTEIN UL4M"/>
    <property type="match status" value="1"/>
</dbReference>
<dbReference type="Pfam" id="PF00573">
    <property type="entry name" value="Ribosomal_L4"/>
    <property type="match status" value="1"/>
</dbReference>
<dbReference type="SUPFAM" id="SSF52166">
    <property type="entry name" value="Ribosomal protein L4"/>
    <property type="match status" value="1"/>
</dbReference>
<gene>
    <name evidence="1" type="primary">rplD</name>
    <name type="ordered locus">NT01CX_1116</name>
</gene>
<feature type="chain" id="PRO_1000052385" description="Large ribosomal subunit protein uL4">
    <location>
        <begin position="1"/>
        <end position="206"/>
    </location>
</feature>
<feature type="region of interest" description="Disordered" evidence="2">
    <location>
        <begin position="45"/>
        <end position="76"/>
    </location>
</feature>
<accession>A0PXU7</accession>